<protein>
    <recommendedName>
        <fullName evidence="1">Cytochrome c-type biogenesis protein CcmE</fullName>
    </recommendedName>
    <alternativeName>
        <fullName evidence="1">Cytochrome c maturation protein E</fullName>
    </alternativeName>
    <alternativeName>
        <fullName evidence="1">Heme chaperone CcmE</fullName>
    </alternativeName>
</protein>
<comment type="function">
    <text evidence="1">Heme chaperone required for the biogenesis of c-type cytochromes. Transiently binds heme delivered by CcmC and transfers the heme to apo-cytochromes in a process facilitated by CcmF and CcmH.</text>
</comment>
<comment type="subcellular location">
    <subcellularLocation>
        <location evidence="1">Cell inner membrane</location>
        <topology evidence="1">Single-pass type II membrane protein</topology>
        <orientation evidence="1">Periplasmic side</orientation>
    </subcellularLocation>
</comment>
<comment type="similarity">
    <text evidence="1">Belongs to the CcmE/CycJ family.</text>
</comment>
<proteinExistence type="inferred from homology"/>
<feature type="chain" id="PRO_1000189017" description="Cytochrome c-type biogenesis protein CcmE">
    <location>
        <begin position="1"/>
        <end position="159"/>
    </location>
</feature>
<feature type="topological domain" description="Cytoplasmic" evidence="1">
    <location>
        <begin position="1"/>
        <end position="8"/>
    </location>
</feature>
<feature type="transmembrane region" description="Helical; Signal-anchor for type II membrane protein" evidence="1">
    <location>
        <begin position="9"/>
        <end position="29"/>
    </location>
</feature>
<feature type="topological domain" description="Periplasmic" evidence="1">
    <location>
        <begin position="30"/>
        <end position="159"/>
    </location>
</feature>
<feature type="region of interest" description="Disordered" evidence="2">
    <location>
        <begin position="132"/>
        <end position="159"/>
    </location>
</feature>
<feature type="compositionally biased region" description="Basic and acidic residues" evidence="2">
    <location>
        <begin position="132"/>
        <end position="147"/>
    </location>
</feature>
<feature type="binding site" description="covalent" evidence="1">
    <location>
        <position position="130"/>
    </location>
    <ligand>
        <name>heme</name>
        <dbReference type="ChEBI" id="CHEBI:30413"/>
    </ligand>
</feature>
<feature type="binding site" description="axial binding residue" evidence="1">
    <location>
        <position position="134"/>
    </location>
    <ligand>
        <name>heme</name>
        <dbReference type="ChEBI" id="CHEBI:30413"/>
    </ligand>
    <ligandPart>
        <name>Fe</name>
        <dbReference type="ChEBI" id="CHEBI:18248"/>
    </ligandPart>
</feature>
<sequence length="159" mass="17698">MNIRRKNRLWIACAVLAGLALTIGLVLYALRSNIDLFYTPGEILYGKRETQQMPEVGQRLRVGGMVMPGSVQRDPNSLKVTFTIYDAEGSVDVSYEGILPDLFREGQGVVVQGELEKGNHILAKEVLAKHDENYTPPEVEKAMEANHRRPASVYKDPAS</sequence>
<accession>B7MXM7</accession>
<organism>
    <name type="scientific">Escherichia coli O81 (strain ED1a)</name>
    <dbReference type="NCBI Taxonomy" id="585397"/>
    <lineage>
        <taxon>Bacteria</taxon>
        <taxon>Pseudomonadati</taxon>
        <taxon>Pseudomonadota</taxon>
        <taxon>Gammaproteobacteria</taxon>
        <taxon>Enterobacterales</taxon>
        <taxon>Enterobacteriaceae</taxon>
        <taxon>Escherichia</taxon>
    </lineage>
</organism>
<gene>
    <name evidence="1" type="primary">ccmE</name>
    <name evidence="1" type="synonym">cycJ</name>
    <name type="ordered locus">ECED1_2662</name>
</gene>
<evidence type="ECO:0000255" key="1">
    <source>
        <dbReference type="HAMAP-Rule" id="MF_01959"/>
    </source>
</evidence>
<evidence type="ECO:0000256" key="2">
    <source>
        <dbReference type="SAM" id="MobiDB-lite"/>
    </source>
</evidence>
<reference key="1">
    <citation type="journal article" date="2009" name="PLoS Genet.">
        <title>Organised genome dynamics in the Escherichia coli species results in highly diverse adaptive paths.</title>
        <authorList>
            <person name="Touchon M."/>
            <person name="Hoede C."/>
            <person name="Tenaillon O."/>
            <person name="Barbe V."/>
            <person name="Baeriswyl S."/>
            <person name="Bidet P."/>
            <person name="Bingen E."/>
            <person name="Bonacorsi S."/>
            <person name="Bouchier C."/>
            <person name="Bouvet O."/>
            <person name="Calteau A."/>
            <person name="Chiapello H."/>
            <person name="Clermont O."/>
            <person name="Cruveiller S."/>
            <person name="Danchin A."/>
            <person name="Diard M."/>
            <person name="Dossat C."/>
            <person name="Karoui M.E."/>
            <person name="Frapy E."/>
            <person name="Garry L."/>
            <person name="Ghigo J.M."/>
            <person name="Gilles A.M."/>
            <person name="Johnson J."/>
            <person name="Le Bouguenec C."/>
            <person name="Lescat M."/>
            <person name="Mangenot S."/>
            <person name="Martinez-Jehanne V."/>
            <person name="Matic I."/>
            <person name="Nassif X."/>
            <person name="Oztas S."/>
            <person name="Petit M.A."/>
            <person name="Pichon C."/>
            <person name="Rouy Z."/>
            <person name="Ruf C.S."/>
            <person name="Schneider D."/>
            <person name="Tourret J."/>
            <person name="Vacherie B."/>
            <person name="Vallenet D."/>
            <person name="Medigue C."/>
            <person name="Rocha E.P.C."/>
            <person name="Denamur E."/>
        </authorList>
    </citation>
    <scope>NUCLEOTIDE SEQUENCE [LARGE SCALE GENOMIC DNA]</scope>
    <source>
        <strain>ED1a</strain>
    </source>
</reference>
<keyword id="KW-0997">Cell inner membrane</keyword>
<keyword id="KW-1003">Cell membrane</keyword>
<keyword id="KW-0201">Cytochrome c-type biogenesis</keyword>
<keyword id="KW-0349">Heme</keyword>
<keyword id="KW-0408">Iron</keyword>
<keyword id="KW-0472">Membrane</keyword>
<keyword id="KW-0479">Metal-binding</keyword>
<keyword id="KW-0735">Signal-anchor</keyword>
<keyword id="KW-0812">Transmembrane</keyword>
<keyword id="KW-1133">Transmembrane helix</keyword>
<name>CCME_ECO81</name>
<dbReference type="EMBL" id="CU928162">
    <property type="protein sequence ID" value="CAR08843.2"/>
    <property type="molecule type" value="Genomic_DNA"/>
</dbReference>
<dbReference type="RefSeq" id="WP_001026418.1">
    <property type="nucleotide sequence ID" value="NC_011745.1"/>
</dbReference>
<dbReference type="SMR" id="B7MXM7"/>
<dbReference type="GeneID" id="86860369"/>
<dbReference type="KEGG" id="ecq:ECED1_2662"/>
<dbReference type="HOGENOM" id="CLU_079503_1_0_6"/>
<dbReference type="Proteomes" id="UP000000748">
    <property type="component" value="Chromosome"/>
</dbReference>
<dbReference type="GO" id="GO:0005886">
    <property type="term" value="C:plasma membrane"/>
    <property type="evidence" value="ECO:0007669"/>
    <property type="project" value="UniProtKB-SubCell"/>
</dbReference>
<dbReference type="GO" id="GO:0020037">
    <property type="term" value="F:heme binding"/>
    <property type="evidence" value="ECO:0007669"/>
    <property type="project" value="InterPro"/>
</dbReference>
<dbReference type="GO" id="GO:0046872">
    <property type="term" value="F:metal ion binding"/>
    <property type="evidence" value="ECO:0007669"/>
    <property type="project" value="UniProtKB-KW"/>
</dbReference>
<dbReference type="GO" id="GO:0017004">
    <property type="term" value="P:cytochrome complex assembly"/>
    <property type="evidence" value="ECO:0007669"/>
    <property type="project" value="UniProtKB-KW"/>
</dbReference>
<dbReference type="FunFam" id="2.40.50.140:FF:000104">
    <property type="entry name" value="Cytochrome c-type biogenesis protein CcmE"/>
    <property type="match status" value="1"/>
</dbReference>
<dbReference type="Gene3D" id="2.40.50.140">
    <property type="entry name" value="Nucleic acid-binding proteins"/>
    <property type="match status" value="1"/>
</dbReference>
<dbReference type="HAMAP" id="MF_01959">
    <property type="entry name" value="CcmE"/>
    <property type="match status" value="1"/>
</dbReference>
<dbReference type="InterPro" id="IPR004329">
    <property type="entry name" value="CcmE"/>
</dbReference>
<dbReference type="InterPro" id="IPR036127">
    <property type="entry name" value="CcmE-like_sf"/>
</dbReference>
<dbReference type="InterPro" id="IPR012340">
    <property type="entry name" value="NA-bd_OB-fold"/>
</dbReference>
<dbReference type="NCBIfam" id="NF009635">
    <property type="entry name" value="PRK13150.1"/>
    <property type="match status" value="1"/>
</dbReference>
<dbReference type="NCBIfam" id="NF009638">
    <property type="entry name" value="PRK13165.1"/>
    <property type="match status" value="1"/>
</dbReference>
<dbReference type="NCBIfam" id="NF009727">
    <property type="entry name" value="PRK13254.1-1"/>
    <property type="match status" value="1"/>
</dbReference>
<dbReference type="NCBIfam" id="NF009729">
    <property type="entry name" value="PRK13254.1-3"/>
    <property type="match status" value="1"/>
</dbReference>
<dbReference type="PANTHER" id="PTHR34128">
    <property type="entry name" value="CYTOCHROME C-TYPE BIOGENESIS PROTEIN CCME HOMOLOG, MITOCHONDRIAL"/>
    <property type="match status" value="1"/>
</dbReference>
<dbReference type="PANTHER" id="PTHR34128:SF2">
    <property type="entry name" value="CYTOCHROME C-TYPE BIOGENESIS PROTEIN CCME HOMOLOG, MITOCHONDRIAL"/>
    <property type="match status" value="1"/>
</dbReference>
<dbReference type="Pfam" id="PF03100">
    <property type="entry name" value="CcmE"/>
    <property type="match status" value="1"/>
</dbReference>
<dbReference type="SUPFAM" id="SSF82093">
    <property type="entry name" value="Heme chaperone CcmE"/>
    <property type="match status" value="1"/>
</dbReference>